<name>TRUB_THIDA</name>
<feature type="chain" id="PRO_0000229390" description="tRNA pseudouridine synthase B">
    <location>
        <begin position="1"/>
        <end position="298"/>
    </location>
</feature>
<feature type="active site" description="Nucleophile" evidence="1">
    <location>
        <position position="45"/>
    </location>
</feature>
<evidence type="ECO:0000255" key="1">
    <source>
        <dbReference type="HAMAP-Rule" id="MF_01080"/>
    </source>
</evidence>
<dbReference type="EC" id="5.4.99.25" evidence="1"/>
<dbReference type="EMBL" id="CP000116">
    <property type="protein sequence ID" value="AAZ96648.1"/>
    <property type="molecule type" value="Genomic_DNA"/>
</dbReference>
<dbReference type="RefSeq" id="WP_011311207.1">
    <property type="nucleotide sequence ID" value="NC_007404.1"/>
</dbReference>
<dbReference type="SMR" id="Q3SKX3"/>
<dbReference type="STRING" id="292415.Tbd_0695"/>
<dbReference type="KEGG" id="tbd:Tbd_0695"/>
<dbReference type="eggNOG" id="COG0130">
    <property type="taxonomic scope" value="Bacteria"/>
</dbReference>
<dbReference type="HOGENOM" id="CLU_032087_0_3_4"/>
<dbReference type="OrthoDB" id="9802309at2"/>
<dbReference type="Proteomes" id="UP000008291">
    <property type="component" value="Chromosome"/>
</dbReference>
<dbReference type="GO" id="GO:0003723">
    <property type="term" value="F:RNA binding"/>
    <property type="evidence" value="ECO:0007669"/>
    <property type="project" value="InterPro"/>
</dbReference>
<dbReference type="GO" id="GO:0160148">
    <property type="term" value="F:tRNA pseudouridine(55) synthase activity"/>
    <property type="evidence" value="ECO:0007669"/>
    <property type="project" value="UniProtKB-EC"/>
</dbReference>
<dbReference type="GO" id="GO:1990481">
    <property type="term" value="P:mRNA pseudouridine synthesis"/>
    <property type="evidence" value="ECO:0007669"/>
    <property type="project" value="TreeGrafter"/>
</dbReference>
<dbReference type="GO" id="GO:0031119">
    <property type="term" value="P:tRNA pseudouridine synthesis"/>
    <property type="evidence" value="ECO:0007669"/>
    <property type="project" value="UniProtKB-UniRule"/>
</dbReference>
<dbReference type="CDD" id="cd02573">
    <property type="entry name" value="PseudoU_synth_EcTruB"/>
    <property type="match status" value="1"/>
</dbReference>
<dbReference type="CDD" id="cd21152">
    <property type="entry name" value="PUA_TruB_bacterial"/>
    <property type="match status" value="1"/>
</dbReference>
<dbReference type="FunFam" id="3.30.2350.10:FF:000011">
    <property type="entry name" value="tRNA pseudouridine synthase B"/>
    <property type="match status" value="1"/>
</dbReference>
<dbReference type="Gene3D" id="3.30.2350.10">
    <property type="entry name" value="Pseudouridine synthase"/>
    <property type="match status" value="1"/>
</dbReference>
<dbReference type="Gene3D" id="2.30.130.10">
    <property type="entry name" value="PUA domain"/>
    <property type="match status" value="1"/>
</dbReference>
<dbReference type="HAMAP" id="MF_01080">
    <property type="entry name" value="TruB_bact"/>
    <property type="match status" value="1"/>
</dbReference>
<dbReference type="InterPro" id="IPR020103">
    <property type="entry name" value="PsdUridine_synth_cat_dom_sf"/>
</dbReference>
<dbReference type="InterPro" id="IPR002501">
    <property type="entry name" value="PsdUridine_synth_N"/>
</dbReference>
<dbReference type="InterPro" id="IPR015947">
    <property type="entry name" value="PUA-like_sf"/>
</dbReference>
<dbReference type="InterPro" id="IPR036974">
    <property type="entry name" value="PUA_sf"/>
</dbReference>
<dbReference type="InterPro" id="IPR014780">
    <property type="entry name" value="tRNA_psdUridine_synth_TruB"/>
</dbReference>
<dbReference type="InterPro" id="IPR015240">
    <property type="entry name" value="tRNA_sdUridine_synth_fam1_C"/>
</dbReference>
<dbReference type="InterPro" id="IPR032819">
    <property type="entry name" value="TruB_C"/>
</dbReference>
<dbReference type="NCBIfam" id="TIGR00431">
    <property type="entry name" value="TruB"/>
    <property type="match status" value="1"/>
</dbReference>
<dbReference type="PANTHER" id="PTHR13767:SF2">
    <property type="entry name" value="PSEUDOURIDYLATE SYNTHASE TRUB1"/>
    <property type="match status" value="1"/>
</dbReference>
<dbReference type="PANTHER" id="PTHR13767">
    <property type="entry name" value="TRNA-PSEUDOURIDINE SYNTHASE"/>
    <property type="match status" value="1"/>
</dbReference>
<dbReference type="Pfam" id="PF09157">
    <property type="entry name" value="TruB-C_2"/>
    <property type="match status" value="1"/>
</dbReference>
<dbReference type="Pfam" id="PF16198">
    <property type="entry name" value="TruB_C_2"/>
    <property type="match status" value="1"/>
</dbReference>
<dbReference type="Pfam" id="PF01509">
    <property type="entry name" value="TruB_N"/>
    <property type="match status" value="1"/>
</dbReference>
<dbReference type="SUPFAM" id="SSF55120">
    <property type="entry name" value="Pseudouridine synthase"/>
    <property type="match status" value="1"/>
</dbReference>
<dbReference type="SUPFAM" id="SSF88697">
    <property type="entry name" value="PUA domain-like"/>
    <property type="match status" value="1"/>
</dbReference>
<protein>
    <recommendedName>
        <fullName evidence="1">tRNA pseudouridine synthase B</fullName>
        <ecNumber evidence="1">5.4.99.25</ecNumber>
    </recommendedName>
    <alternativeName>
        <fullName evidence="1">tRNA pseudouridine(55) synthase</fullName>
        <shortName evidence="1">Psi55 synthase</shortName>
    </alternativeName>
    <alternativeName>
        <fullName evidence="1">tRNA pseudouridylate synthase</fullName>
    </alternativeName>
    <alternativeName>
        <fullName evidence="1">tRNA-uridine isomerase</fullName>
    </alternativeName>
</protein>
<reference key="1">
    <citation type="journal article" date="2006" name="J. Bacteriol.">
        <title>The genome sequence of the obligately chemolithoautotrophic, facultatively anaerobic bacterium Thiobacillus denitrificans.</title>
        <authorList>
            <person name="Beller H.R."/>
            <person name="Chain P.S."/>
            <person name="Letain T.E."/>
            <person name="Chakicherla A."/>
            <person name="Larimer F.W."/>
            <person name="Richardson P.M."/>
            <person name="Coleman M.A."/>
            <person name="Wood A.P."/>
            <person name="Kelly D.P."/>
        </authorList>
    </citation>
    <scope>NUCLEOTIDE SEQUENCE [LARGE SCALE GENOMIC DNA]</scope>
    <source>
        <strain>ATCC 25259 / T1</strain>
    </source>
</reference>
<comment type="function">
    <text evidence="1">Responsible for synthesis of pseudouridine from uracil-55 in the psi GC loop of transfer RNAs.</text>
</comment>
<comment type="catalytic activity">
    <reaction evidence="1">
        <text>uridine(55) in tRNA = pseudouridine(55) in tRNA</text>
        <dbReference type="Rhea" id="RHEA:42532"/>
        <dbReference type="Rhea" id="RHEA-COMP:10101"/>
        <dbReference type="Rhea" id="RHEA-COMP:10102"/>
        <dbReference type="ChEBI" id="CHEBI:65314"/>
        <dbReference type="ChEBI" id="CHEBI:65315"/>
        <dbReference type="EC" id="5.4.99.25"/>
    </reaction>
</comment>
<comment type="similarity">
    <text evidence="1">Belongs to the pseudouridine synthase TruB family. Type 1 subfamily.</text>
</comment>
<organism>
    <name type="scientific">Thiobacillus denitrificans (strain ATCC 25259 / T1)</name>
    <dbReference type="NCBI Taxonomy" id="292415"/>
    <lineage>
        <taxon>Bacteria</taxon>
        <taxon>Pseudomonadati</taxon>
        <taxon>Pseudomonadota</taxon>
        <taxon>Betaproteobacteria</taxon>
        <taxon>Nitrosomonadales</taxon>
        <taxon>Thiobacillaceae</taxon>
        <taxon>Thiobacillus</taxon>
    </lineage>
</organism>
<keyword id="KW-0413">Isomerase</keyword>
<keyword id="KW-1185">Reference proteome</keyword>
<keyword id="KW-0819">tRNA processing</keyword>
<gene>
    <name evidence="1" type="primary">truB</name>
    <name type="ordered locus">Tbd_0695</name>
</gene>
<proteinExistence type="inferred from homology"/>
<sequence>MKPARQAVDGVLLLNKPVGITSNAALQKAKWLLNAKKAGHTGTLDPFADGLLPLCFGEATKFSAYLLDADKRYRAILQLGVTTRTGDPEGEVLATREVRATCADIRAALPAFVGEIEQIPPMHSALKHQGRPLYEYARAGVEIARAPRRVHIRALDLFKCAPPRAVVDVQCSAGTYVRTLAEDLGNALGCGAHLTALTRTASGGFLLEQAHTLAELEATNAGARQALLLPADCLVAHLPSVHLGETAAASLRQGRSVPDAADRRGLVRVYDGHGVFVGLAEAEAGKLVPRRLIATVQA</sequence>
<accession>Q3SKX3</accession>